<sequence>MAKSKGVRIIVTLECTECRTATAAEKRSPGVSRYTTTKNRRNNLERLELMKFCPQLNRMTLHREIK</sequence>
<comment type="similarity">
    <text evidence="1">Belongs to the bacterial ribosomal protein bL33 family.</text>
</comment>
<gene>
    <name evidence="1" type="primary">rpmG2</name>
    <name evidence="1" type="synonym">rpl33-2</name>
    <name type="ordered locus">Syncc9605_1587</name>
</gene>
<feature type="chain" id="PRO_0000356758" description="Large ribosomal subunit protein bL33B">
    <location>
        <begin position="1"/>
        <end position="66"/>
    </location>
</feature>
<reference key="1">
    <citation type="submission" date="2005-07" db="EMBL/GenBank/DDBJ databases">
        <title>Complete sequence of Synechococcus sp. CC9605.</title>
        <authorList>
            <consortium name="US DOE Joint Genome Institute"/>
            <person name="Copeland A."/>
            <person name="Lucas S."/>
            <person name="Lapidus A."/>
            <person name="Barry K."/>
            <person name="Detter J.C."/>
            <person name="Glavina T."/>
            <person name="Hammon N."/>
            <person name="Israni S."/>
            <person name="Pitluck S."/>
            <person name="Schmutz J."/>
            <person name="Martinez M."/>
            <person name="Larimer F."/>
            <person name="Land M."/>
            <person name="Kyrpides N."/>
            <person name="Ivanova N."/>
            <person name="Richardson P."/>
        </authorList>
    </citation>
    <scope>NUCLEOTIDE SEQUENCE [LARGE SCALE GENOMIC DNA]</scope>
    <source>
        <strain>CC9605</strain>
    </source>
</reference>
<organism>
    <name type="scientific">Synechococcus sp. (strain CC9605)</name>
    <dbReference type="NCBI Taxonomy" id="110662"/>
    <lineage>
        <taxon>Bacteria</taxon>
        <taxon>Bacillati</taxon>
        <taxon>Cyanobacteriota</taxon>
        <taxon>Cyanophyceae</taxon>
        <taxon>Synechococcales</taxon>
        <taxon>Synechococcaceae</taxon>
        <taxon>Synechococcus</taxon>
    </lineage>
</organism>
<keyword id="KW-0687">Ribonucleoprotein</keyword>
<keyword id="KW-0689">Ribosomal protein</keyword>
<accession>Q3AJ96</accession>
<protein>
    <recommendedName>
        <fullName evidence="1">Large ribosomal subunit protein bL33B</fullName>
    </recommendedName>
    <alternativeName>
        <fullName evidence="1">50S ribosomal protein L33 2</fullName>
    </alternativeName>
</protein>
<proteinExistence type="inferred from homology"/>
<name>RL332_SYNSC</name>
<dbReference type="EMBL" id="CP000110">
    <property type="protein sequence ID" value="ABB35336.1"/>
    <property type="molecule type" value="Genomic_DNA"/>
</dbReference>
<dbReference type="RefSeq" id="WP_011364548.1">
    <property type="nucleotide sequence ID" value="NC_007516.1"/>
</dbReference>
<dbReference type="SMR" id="Q3AJ96"/>
<dbReference type="STRING" id="110662.Syncc9605_1587"/>
<dbReference type="KEGG" id="syd:Syncc9605_1587"/>
<dbReference type="eggNOG" id="COG0267">
    <property type="taxonomic scope" value="Bacteria"/>
</dbReference>
<dbReference type="HOGENOM" id="CLU_190949_3_0_3"/>
<dbReference type="OrthoDB" id="9801333at2"/>
<dbReference type="GO" id="GO:0005737">
    <property type="term" value="C:cytoplasm"/>
    <property type="evidence" value="ECO:0007669"/>
    <property type="project" value="UniProtKB-ARBA"/>
</dbReference>
<dbReference type="GO" id="GO:1990904">
    <property type="term" value="C:ribonucleoprotein complex"/>
    <property type="evidence" value="ECO:0007669"/>
    <property type="project" value="UniProtKB-KW"/>
</dbReference>
<dbReference type="GO" id="GO:0005840">
    <property type="term" value="C:ribosome"/>
    <property type="evidence" value="ECO:0007669"/>
    <property type="project" value="UniProtKB-KW"/>
</dbReference>
<dbReference type="GO" id="GO:0003735">
    <property type="term" value="F:structural constituent of ribosome"/>
    <property type="evidence" value="ECO:0007669"/>
    <property type="project" value="InterPro"/>
</dbReference>
<dbReference type="GO" id="GO:0006412">
    <property type="term" value="P:translation"/>
    <property type="evidence" value="ECO:0007669"/>
    <property type="project" value="UniProtKB-UniRule"/>
</dbReference>
<dbReference type="Gene3D" id="2.20.28.120">
    <property type="entry name" value="Ribosomal protein L33"/>
    <property type="match status" value="1"/>
</dbReference>
<dbReference type="HAMAP" id="MF_00294">
    <property type="entry name" value="Ribosomal_bL33"/>
    <property type="match status" value="1"/>
</dbReference>
<dbReference type="InterPro" id="IPR001705">
    <property type="entry name" value="Ribosomal_bL33"/>
</dbReference>
<dbReference type="InterPro" id="IPR038584">
    <property type="entry name" value="Ribosomal_bL33_sf"/>
</dbReference>
<dbReference type="InterPro" id="IPR011332">
    <property type="entry name" value="Ribosomal_zn-bd"/>
</dbReference>
<dbReference type="NCBIfam" id="NF001764">
    <property type="entry name" value="PRK00504.1"/>
    <property type="match status" value="1"/>
</dbReference>
<dbReference type="NCBIfam" id="NF001860">
    <property type="entry name" value="PRK00595.1"/>
    <property type="match status" value="1"/>
</dbReference>
<dbReference type="NCBIfam" id="TIGR01023">
    <property type="entry name" value="rpmG_bact"/>
    <property type="match status" value="1"/>
</dbReference>
<dbReference type="PANTHER" id="PTHR43168">
    <property type="entry name" value="50S RIBOSOMAL PROTEIN L33, CHLOROPLASTIC"/>
    <property type="match status" value="1"/>
</dbReference>
<dbReference type="PANTHER" id="PTHR43168:SF2">
    <property type="entry name" value="LARGE RIBOSOMAL SUBUNIT PROTEIN BL33C"/>
    <property type="match status" value="1"/>
</dbReference>
<dbReference type="Pfam" id="PF00471">
    <property type="entry name" value="Ribosomal_L33"/>
    <property type="match status" value="1"/>
</dbReference>
<dbReference type="SUPFAM" id="SSF57829">
    <property type="entry name" value="Zn-binding ribosomal proteins"/>
    <property type="match status" value="1"/>
</dbReference>
<evidence type="ECO:0000255" key="1">
    <source>
        <dbReference type="HAMAP-Rule" id="MF_00294"/>
    </source>
</evidence>